<gene>
    <name evidence="1" type="primary">atpB</name>
</gene>
<keyword id="KW-0066">ATP synthesis</keyword>
<keyword id="KW-0067">ATP-binding</keyword>
<keyword id="KW-0139">CF(1)</keyword>
<keyword id="KW-0150">Chloroplast</keyword>
<keyword id="KW-0375">Hydrogen ion transport</keyword>
<keyword id="KW-0406">Ion transport</keyword>
<keyword id="KW-0472">Membrane</keyword>
<keyword id="KW-0547">Nucleotide-binding</keyword>
<keyword id="KW-0934">Plastid</keyword>
<keyword id="KW-0793">Thylakoid</keyword>
<keyword id="KW-1278">Translocase</keyword>
<keyword id="KW-0813">Transport</keyword>
<reference key="1">
    <citation type="journal article" date="2002" name="Mol. Biol. Evol.">
        <title>The plastid chromosome of Atropa belladonna and its comparison with that of Nicotiana tabacum: the role of RNA editing in generating divergence in the process of plant speciation.</title>
        <authorList>
            <person name="Schmitz-Linneweber C."/>
            <person name="Regel R."/>
            <person name="Du T.G."/>
            <person name="Hupfer H."/>
            <person name="Herrmann R.G."/>
            <person name="Maier R.M."/>
        </authorList>
    </citation>
    <scope>NUCLEOTIDE SEQUENCE [LARGE SCALE GENOMIC DNA]</scope>
    <source>
        <strain>cv. Ab5p(kan)</strain>
    </source>
</reference>
<feature type="chain" id="PRO_0000144498" description="ATP synthase subunit beta, chloroplastic">
    <location>
        <begin position="1"/>
        <end position="498"/>
    </location>
</feature>
<feature type="binding site" evidence="1">
    <location>
        <begin position="172"/>
        <end position="179"/>
    </location>
    <ligand>
        <name>ATP</name>
        <dbReference type="ChEBI" id="CHEBI:30616"/>
    </ligand>
</feature>
<name>ATPB_ATRBE</name>
<dbReference type="EC" id="7.1.2.2" evidence="1"/>
<dbReference type="EMBL" id="AJ316582">
    <property type="protein sequence ID" value="CAC88051.1"/>
    <property type="molecule type" value="Genomic_DNA"/>
</dbReference>
<dbReference type="RefSeq" id="NP_783239.1">
    <property type="nucleotide sequence ID" value="NC_004561.1"/>
</dbReference>
<dbReference type="SMR" id="Q8S8W8"/>
<dbReference type="GeneID" id="806520"/>
<dbReference type="GO" id="GO:0009535">
    <property type="term" value="C:chloroplast thylakoid membrane"/>
    <property type="evidence" value="ECO:0007669"/>
    <property type="project" value="UniProtKB-SubCell"/>
</dbReference>
<dbReference type="GO" id="GO:0005739">
    <property type="term" value="C:mitochondrion"/>
    <property type="evidence" value="ECO:0007669"/>
    <property type="project" value="GOC"/>
</dbReference>
<dbReference type="GO" id="GO:0045259">
    <property type="term" value="C:proton-transporting ATP synthase complex"/>
    <property type="evidence" value="ECO:0007669"/>
    <property type="project" value="UniProtKB-KW"/>
</dbReference>
<dbReference type="GO" id="GO:0005524">
    <property type="term" value="F:ATP binding"/>
    <property type="evidence" value="ECO:0007669"/>
    <property type="project" value="UniProtKB-UniRule"/>
</dbReference>
<dbReference type="GO" id="GO:0016887">
    <property type="term" value="F:ATP hydrolysis activity"/>
    <property type="evidence" value="ECO:0007669"/>
    <property type="project" value="InterPro"/>
</dbReference>
<dbReference type="GO" id="GO:0046933">
    <property type="term" value="F:proton-transporting ATP synthase activity, rotational mechanism"/>
    <property type="evidence" value="ECO:0007669"/>
    <property type="project" value="UniProtKB-UniRule"/>
</dbReference>
<dbReference type="GO" id="GO:0042776">
    <property type="term" value="P:proton motive force-driven mitochondrial ATP synthesis"/>
    <property type="evidence" value="ECO:0007669"/>
    <property type="project" value="TreeGrafter"/>
</dbReference>
<dbReference type="CDD" id="cd18110">
    <property type="entry name" value="ATP-synt_F1_beta_C"/>
    <property type="match status" value="1"/>
</dbReference>
<dbReference type="CDD" id="cd18115">
    <property type="entry name" value="ATP-synt_F1_beta_N"/>
    <property type="match status" value="1"/>
</dbReference>
<dbReference type="CDD" id="cd01133">
    <property type="entry name" value="F1-ATPase_beta_CD"/>
    <property type="match status" value="1"/>
</dbReference>
<dbReference type="FunFam" id="1.10.1140.10:FF:000001">
    <property type="entry name" value="ATP synthase subunit beta"/>
    <property type="match status" value="1"/>
</dbReference>
<dbReference type="FunFam" id="3.40.50.300:FF:000004">
    <property type="entry name" value="ATP synthase subunit beta"/>
    <property type="match status" value="1"/>
</dbReference>
<dbReference type="FunFam" id="2.40.10.170:FF:000002">
    <property type="entry name" value="ATP synthase subunit beta, chloroplastic"/>
    <property type="match status" value="1"/>
</dbReference>
<dbReference type="Gene3D" id="2.40.10.170">
    <property type="match status" value="1"/>
</dbReference>
<dbReference type="Gene3D" id="1.10.1140.10">
    <property type="entry name" value="Bovine Mitochondrial F1-atpase, Atp Synthase Beta Chain, Chain D, domain 3"/>
    <property type="match status" value="1"/>
</dbReference>
<dbReference type="Gene3D" id="3.40.50.300">
    <property type="entry name" value="P-loop containing nucleotide triphosphate hydrolases"/>
    <property type="match status" value="1"/>
</dbReference>
<dbReference type="HAMAP" id="MF_01347">
    <property type="entry name" value="ATP_synth_beta_bact"/>
    <property type="match status" value="1"/>
</dbReference>
<dbReference type="InterPro" id="IPR003593">
    <property type="entry name" value="AAA+_ATPase"/>
</dbReference>
<dbReference type="InterPro" id="IPR055190">
    <property type="entry name" value="ATP-synt_VA_C"/>
</dbReference>
<dbReference type="InterPro" id="IPR005722">
    <property type="entry name" value="ATP_synth_F1_bsu"/>
</dbReference>
<dbReference type="InterPro" id="IPR020003">
    <property type="entry name" value="ATPase_a/bsu_AS"/>
</dbReference>
<dbReference type="InterPro" id="IPR050053">
    <property type="entry name" value="ATPase_alpha/beta_chains"/>
</dbReference>
<dbReference type="InterPro" id="IPR004100">
    <property type="entry name" value="ATPase_F1/V1/A1_a/bsu_N"/>
</dbReference>
<dbReference type="InterPro" id="IPR036121">
    <property type="entry name" value="ATPase_F1/V1/A1_a/bsu_N_sf"/>
</dbReference>
<dbReference type="InterPro" id="IPR000194">
    <property type="entry name" value="ATPase_F1/V1/A1_a/bsu_nucl-bd"/>
</dbReference>
<dbReference type="InterPro" id="IPR024034">
    <property type="entry name" value="ATPase_F1/V1_b/a_C"/>
</dbReference>
<dbReference type="InterPro" id="IPR027417">
    <property type="entry name" value="P-loop_NTPase"/>
</dbReference>
<dbReference type="NCBIfam" id="TIGR01039">
    <property type="entry name" value="atpD"/>
    <property type="match status" value="1"/>
</dbReference>
<dbReference type="PANTHER" id="PTHR15184">
    <property type="entry name" value="ATP SYNTHASE"/>
    <property type="match status" value="1"/>
</dbReference>
<dbReference type="PANTHER" id="PTHR15184:SF71">
    <property type="entry name" value="ATP SYNTHASE SUBUNIT BETA, MITOCHONDRIAL"/>
    <property type="match status" value="1"/>
</dbReference>
<dbReference type="Pfam" id="PF00006">
    <property type="entry name" value="ATP-synt_ab"/>
    <property type="match status" value="1"/>
</dbReference>
<dbReference type="Pfam" id="PF02874">
    <property type="entry name" value="ATP-synt_ab_N"/>
    <property type="match status" value="1"/>
</dbReference>
<dbReference type="Pfam" id="PF22919">
    <property type="entry name" value="ATP-synt_VA_C"/>
    <property type="match status" value="1"/>
</dbReference>
<dbReference type="SMART" id="SM00382">
    <property type="entry name" value="AAA"/>
    <property type="match status" value="1"/>
</dbReference>
<dbReference type="SUPFAM" id="SSF47917">
    <property type="entry name" value="C-terminal domain of alpha and beta subunits of F1 ATP synthase"/>
    <property type="match status" value="1"/>
</dbReference>
<dbReference type="SUPFAM" id="SSF50615">
    <property type="entry name" value="N-terminal domain of alpha and beta subunits of F1 ATP synthase"/>
    <property type="match status" value="1"/>
</dbReference>
<dbReference type="SUPFAM" id="SSF52540">
    <property type="entry name" value="P-loop containing nucleoside triphosphate hydrolases"/>
    <property type="match status" value="1"/>
</dbReference>
<dbReference type="PROSITE" id="PS00152">
    <property type="entry name" value="ATPASE_ALPHA_BETA"/>
    <property type="match status" value="1"/>
</dbReference>
<proteinExistence type="inferred from homology"/>
<accession>Q8S8W8</accession>
<protein>
    <recommendedName>
        <fullName evidence="1">ATP synthase subunit beta, chloroplastic</fullName>
        <ecNumber evidence="1">7.1.2.2</ecNumber>
    </recommendedName>
    <alternativeName>
        <fullName evidence="1">ATP synthase F1 sector subunit beta</fullName>
    </alternativeName>
    <alternativeName>
        <fullName evidence="1">F-ATPase subunit beta</fullName>
    </alternativeName>
</protein>
<sequence length="498" mass="53598">MRINPTTSGSGVSTLEKKNLGRVVQIIGPVLDVAFPPGKMPNIYNALVVQGRDSVGQPINVACEVQQLLGNNRVRAVAMSATDGLTRGMEVIDKGAPISVPVGGATLGRIFNVLGEPVDNLGPVDTSTMSPIHRSAPAFIQLDTKLSIFETGIKVVDLLAPYRRGGKIGLFGGAGVGKTVLIMELINNIAKAHGGVSVFGGVGERTREGNDLYMEMKESGVINEENIAESKVALVYGQMNEPPGARMRVGLTALTMAEYFRDVNEQDVLLFIDNIFRFVQAGSEVSALLGRMPSAVGYQPTLSTEMGSLQERITSTKEGSITSIQAVYVPADDLTDPAPATTFAHLDATTVLSRGLAAKGIYPAVDPLDSTSTMLQPRIVGEEHYETAQRVKQTLQRYKELQDIIAILGLDELSEEDRLLVARARKIERFLSQPFFVAEVFTGSPGKYVGLAETIRGFQLILSGELDGLPEQAFYLVGNIDEATAKAMNLEMESNLKK</sequence>
<organism>
    <name type="scientific">Atropa belladonna</name>
    <name type="common">Belladonna</name>
    <name type="synonym">Deadly nightshade</name>
    <dbReference type="NCBI Taxonomy" id="33113"/>
    <lineage>
        <taxon>Eukaryota</taxon>
        <taxon>Viridiplantae</taxon>
        <taxon>Streptophyta</taxon>
        <taxon>Embryophyta</taxon>
        <taxon>Tracheophyta</taxon>
        <taxon>Spermatophyta</taxon>
        <taxon>Magnoliopsida</taxon>
        <taxon>eudicotyledons</taxon>
        <taxon>Gunneridae</taxon>
        <taxon>Pentapetalae</taxon>
        <taxon>asterids</taxon>
        <taxon>lamiids</taxon>
        <taxon>Solanales</taxon>
        <taxon>Solanaceae</taxon>
        <taxon>Solanoideae</taxon>
        <taxon>Hyoscyameae</taxon>
        <taxon>Atropa</taxon>
    </lineage>
</organism>
<evidence type="ECO:0000255" key="1">
    <source>
        <dbReference type="HAMAP-Rule" id="MF_01347"/>
    </source>
</evidence>
<geneLocation type="chloroplast"/>
<comment type="function">
    <text evidence="1">Produces ATP from ADP in the presence of a proton gradient across the membrane. The catalytic sites are hosted primarily by the beta subunits.</text>
</comment>
<comment type="catalytic activity">
    <reaction evidence="1">
        <text>ATP + H2O + 4 H(+)(in) = ADP + phosphate + 5 H(+)(out)</text>
        <dbReference type="Rhea" id="RHEA:57720"/>
        <dbReference type="ChEBI" id="CHEBI:15377"/>
        <dbReference type="ChEBI" id="CHEBI:15378"/>
        <dbReference type="ChEBI" id="CHEBI:30616"/>
        <dbReference type="ChEBI" id="CHEBI:43474"/>
        <dbReference type="ChEBI" id="CHEBI:456216"/>
        <dbReference type="EC" id="7.1.2.2"/>
    </reaction>
</comment>
<comment type="subunit">
    <text evidence="1">F-type ATPases have 2 components, CF(1) - the catalytic core - and CF(0) - the membrane proton channel. CF(1) has five subunits: alpha(3), beta(3), gamma(1), delta(1), epsilon(1). CF(0) has four main subunits: a(1), b(1), b'(1) and c(9-12).</text>
</comment>
<comment type="subcellular location">
    <subcellularLocation>
        <location evidence="1">Plastid</location>
        <location evidence="1">Chloroplast thylakoid membrane</location>
        <topology evidence="1">Peripheral membrane protein</topology>
    </subcellularLocation>
</comment>
<comment type="similarity">
    <text evidence="1">Belongs to the ATPase alpha/beta chains family.</text>
</comment>